<protein>
    <recommendedName>
        <fullName>Zinc finger protein 184</fullName>
    </recommendedName>
</protein>
<organism>
    <name type="scientific">Bos taurus</name>
    <name type="common">Bovine</name>
    <dbReference type="NCBI Taxonomy" id="9913"/>
    <lineage>
        <taxon>Eukaryota</taxon>
        <taxon>Metazoa</taxon>
        <taxon>Chordata</taxon>
        <taxon>Craniata</taxon>
        <taxon>Vertebrata</taxon>
        <taxon>Euteleostomi</taxon>
        <taxon>Mammalia</taxon>
        <taxon>Eutheria</taxon>
        <taxon>Laurasiatheria</taxon>
        <taxon>Artiodactyla</taxon>
        <taxon>Ruminantia</taxon>
        <taxon>Pecora</taxon>
        <taxon>Bovidae</taxon>
        <taxon>Bovinae</taxon>
        <taxon>Bos</taxon>
    </lineage>
</organism>
<keyword id="KW-0238">DNA-binding</keyword>
<keyword id="KW-1017">Isopeptide bond</keyword>
<keyword id="KW-0479">Metal-binding</keyword>
<keyword id="KW-0539">Nucleus</keyword>
<keyword id="KW-0597">Phosphoprotein</keyword>
<keyword id="KW-1185">Reference proteome</keyword>
<keyword id="KW-0677">Repeat</keyword>
<keyword id="KW-0804">Transcription</keyword>
<keyword id="KW-0805">Transcription regulation</keyword>
<keyword id="KW-0832">Ubl conjugation</keyword>
<keyword id="KW-0862">Zinc</keyword>
<keyword id="KW-0863">Zinc-finger</keyword>
<reference key="1">
    <citation type="submission" date="2007-06" db="EMBL/GenBank/DDBJ databases">
        <authorList>
            <consortium name="NIH - Mammalian Gene Collection (MGC) project"/>
        </authorList>
    </citation>
    <scope>NUCLEOTIDE SEQUENCE [LARGE SCALE MRNA]</scope>
    <source>
        <strain>Hereford</strain>
        <tissue>Hypothalamus</tissue>
    </source>
</reference>
<gene>
    <name type="primary">ZNF184</name>
</gene>
<evidence type="ECO:0000250" key="1"/>
<evidence type="ECO:0000250" key="2">
    <source>
        <dbReference type="UniProtKB" id="Q99676"/>
    </source>
</evidence>
<evidence type="ECO:0000255" key="3">
    <source>
        <dbReference type="PROSITE-ProRule" id="PRU00042"/>
    </source>
</evidence>
<evidence type="ECO:0000255" key="4">
    <source>
        <dbReference type="PROSITE-ProRule" id="PRU00119"/>
    </source>
</evidence>
<evidence type="ECO:0000305" key="5"/>
<name>ZN184_BOVIN</name>
<feature type="chain" id="PRO_0000347242" description="Zinc finger protein 184">
    <location>
        <begin position="1"/>
        <end position="752"/>
    </location>
</feature>
<feature type="domain" description="KRAB" evidence="4">
    <location>
        <begin position="28"/>
        <end position="99"/>
    </location>
</feature>
<feature type="zinc finger region" description="C2H2-type 1" evidence="3">
    <location>
        <begin position="223"/>
        <end position="245"/>
    </location>
</feature>
<feature type="zinc finger region" description="C2H2-type 2" evidence="3">
    <location>
        <begin position="251"/>
        <end position="273"/>
    </location>
</feature>
<feature type="zinc finger region" description="C2H2-type 3" evidence="3">
    <location>
        <begin position="279"/>
        <end position="301"/>
    </location>
</feature>
<feature type="zinc finger region" description="C2H2-type 4" evidence="3">
    <location>
        <begin position="307"/>
        <end position="329"/>
    </location>
</feature>
<feature type="zinc finger region" description="C2H2-type 5" evidence="3">
    <location>
        <begin position="335"/>
        <end position="357"/>
    </location>
</feature>
<feature type="zinc finger region" description="C2H2-type 6" evidence="3">
    <location>
        <begin position="363"/>
        <end position="385"/>
    </location>
</feature>
<feature type="zinc finger region" description="C2H2-type 7" evidence="3">
    <location>
        <begin position="391"/>
        <end position="413"/>
    </location>
</feature>
<feature type="zinc finger region" description="C2H2-type 8" evidence="3">
    <location>
        <begin position="419"/>
        <end position="441"/>
    </location>
</feature>
<feature type="zinc finger region" description="C2H2-type 9" evidence="3">
    <location>
        <begin position="447"/>
        <end position="469"/>
    </location>
</feature>
<feature type="zinc finger region" description="C2H2-type 10" evidence="3">
    <location>
        <begin position="475"/>
        <end position="497"/>
    </location>
</feature>
<feature type="zinc finger region" description="C2H2-type 11" evidence="3">
    <location>
        <begin position="503"/>
        <end position="525"/>
    </location>
</feature>
<feature type="zinc finger region" description="C2H2-type 12" evidence="3">
    <location>
        <begin position="531"/>
        <end position="553"/>
    </location>
</feature>
<feature type="zinc finger region" description="C2H2-type 13" evidence="3">
    <location>
        <begin position="559"/>
        <end position="581"/>
    </location>
</feature>
<feature type="zinc finger region" description="C2H2-type 14" evidence="3">
    <location>
        <begin position="587"/>
        <end position="609"/>
    </location>
</feature>
<feature type="zinc finger region" description="C2H2-type 15" evidence="3">
    <location>
        <begin position="615"/>
        <end position="637"/>
    </location>
</feature>
<feature type="zinc finger region" description="C2H2-type 16" evidence="3">
    <location>
        <begin position="643"/>
        <end position="665"/>
    </location>
</feature>
<feature type="zinc finger region" description="C2H2-type 17" evidence="3">
    <location>
        <begin position="671"/>
        <end position="693"/>
    </location>
</feature>
<feature type="zinc finger region" description="C2H2-type 18" evidence="3">
    <location>
        <begin position="699"/>
        <end position="721"/>
    </location>
</feature>
<feature type="zinc finger region" description="C2H2-type 19" evidence="3">
    <location>
        <begin position="727"/>
        <end position="749"/>
    </location>
</feature>
<feature type="modified residue" description="Phosphoserine" evidence="2">
    <location>
        <position position="117"/>
    </location>
</feature>
<feature type="modified residue" description="Phosphoserine" evidence="2">
    <location>
        <position position="122"/>
    </location>
</feature>
<feature type="modified residue" description="Phosphoserine" evidence="2">
    <location>
        <position position="200"/>
    </location>
</feature>
<feature type="cross-link" description="Glycyl lysine isopeptide (Lys-Gly) (interchain with G-Cter in SUMO2)" evidence="2">
    <location>
        <position position="207"/>
    </location>
</feature>
<dbReference type="EMBL" id="BC148089">
    <property type="protein sequence ID" value="AAI48090.1"/>
    <property type="molecule type" value="mRNA"/>
</dbReference>
<dbReference type="RefSeq" id="NP_001093842.1">
    <property type="nucleotide sequence ID" value="NM_001100372.1"/>
</dbReference>
<dbReference type="RefSeq" id="XP_005223780.1">
    <property type="nucleotide sequence ID" value="XM_005223723.5"/>
</dbReference>
<dbReference type="RefSeq" id="XP_005223781.1">
    <property type="nucleotide sequence ID" value="XM_005223724.5"/>
</dbReference>
<dbReference type="RefSeq" id="XP_005223782.1">
    <property type="nucleotide sequence ID" value="XM_005223725.5"/>
</dbReference>
<dbReference type="SMR" id="A6QLU5"/>
<dbReference type="STRING" id="9913.ENSBTAP00000066220"/>
<dbReference type="PaxDb" id="9913-ENSBTAP00000015283"/>
<dbReference type="GeneID" id="515674"/>
<dbReference type="KEGG" id="bta:515674"/>
<dbReference type="CTD" id="7738"/>
<dbReference type="eggNOG" id="KOG1721">
    <property type="taxonomic scope" value="Eukaryota"/>
</dbReference>
<dbReference type="HOGENOM" id="CLU_002678_44_5_1"/>
<dbReference type="InParanoid" id="A6QLU5"/>
<dbReference type="OrthoDB" id="9411774at2759"/>
<dbReference type="TreeFam" id="TF350822"/>
<dbReference type="Proteomes" id="UP000009136">
    <property type="component" value="Unplaced"/>
</dbReference>
<dbReference type="GO" id="GO:0005634">
    <property type="term" value="C:nucleus"/>
    <property type="evidence" value="ECO:0007669"/>
    <property type="project" value="UniProtKB-SubCell"/>
</dbReference>
<dbReference type="GO" id="GO:0003700">
    <property type="term" value="F:DNA-binding transcription factor activity"/>
    <property type="evidence" value="ECO:0000318"/>
    <property type="project" value="GO_Central"/>
</dbReference>
<dbReference type="GO" id="GO:0000978">
    <property type="term" value="F:RNA polymerase II cis-regulatory region sequence-specific DNA binding"/>
    <property type="evidence" value="ECO:0000318"/>
    <property type="project" value="GO_Central"/>
</dbReference>
<dbReference type="GO" id="GO:0008270">
    <property type="term" value="F:zinc ion binding"/>
    <property type="evidence" value="ECO:0007669"/>
    <property type="project" value="UniProtKB-KW"/>
</dbReference>
<dbReference type="GO" id="GO:0006357">
    <property type="term" value="P:regulation of transcription by RNA polymerase II"/>
    <property type="evidence" value="ECO:0000318"/>
    <property type="project" value="GO_Central"/>
</dbReference>
<dbReference type="CDD" id="cd07765">
    <property type="entry name" value="KRAB_A-box"/>
    <property type="match status" value="1"/>
</dbReference>
<dbReference type="FunFam" id="3.30.160.60:FF:004137">
    <property type="match status" value="1"/>
</dbReference>
<dbReference type="FunFam" id="3.30.160.60:FF:000144">
    <property type="entry name" value="zinc finger protein 181 isoform X1"/>
    <property type="match status" value="1"/>
</dbReference>
<dbReference type="FunFam" id="3.30.160.60:FF:000638">
    <property type="entry name" value="Zinc finger protein 184"/>
    <property type="match status" value="1"/>
</dbReference>
<dbReference type="FunFam" id="3.30.160.60:FF:000824">
    <property type="entry name" value="Zinc finger protein 184"/>
    <property type="match status" value="1"/>
</dbReference>
<dbReference type="FunFam" id="3.30.160.60:FF:001085">
    <property type="entry name" value="Zinc finger protein 184"/>
    <property type="match status" value="1"/>
</dbReference>
<dbReference type="FunFam" id="3.30.160.60:FF:001100">
    <property type="entry name" value="Zinc finger protein 184"/>
    <property type="match status" value="1"/>
</dbReference>
<dbReference type="FunFam" id="3.30.160.60:FF:000295">
    <property type="entry name" value="zinc finger protein 19"/>
    <property type="match status" value="1"/>
</dbReference>
<dbReference type="FunFam" id="3.30.160.60:FF:001158">
    <property type="entry name" value="zinc finger protein 22"/>
    <property type="match status" value="1"/>
</dbReference>
<dbReference type="FunFam" id="3.30.160.60:FF:000252">
    <property type="entry name" value="Zinc finger protein 287"/>
    <property type="match status" value="1"/>
</dbReference>
<dbReference type="FunFam" id="3.30.160.60:FF:002278">
    <property type="entry name" value="Zinc finger protein 320"/>
    <property type="match status" value="1"/>
</dbReference>
<dbReference type="FunFam" id="3.30.160.60:FF:002343">
    <property type="entry name" value="Zinc finger protein 33A"/>
    <property type="match status" value="1"/>
</dbReference>
<dbReference type="FunFam" id="3.30.160.60:FF:000016">
    <property type="entry name" value="zinc finger protein 37 homolog"/>
    <property type="match status" value="2"/>
</dbReference>
<dbReference type="FunFam" id="3.30.160.60:FF:001498">
    <property type="entry name" value="Zinc finger protein 404"/>
    <property type="match status" value="1"/>
</dbReference>
<dbReference type="FunFam" id="3.30.160.60:FF:000519">
    <property type="entry name" value="Zinc finger protein 470"/>
    <property type="match status" value="1"/>
</dbReference>
<dbReference type="FunFam" id="3.30.160.60:FF:002090">
    <property type="entry name" value="Zinc finger protein 473"/>
    <property type="match status" value="4"/>
</dbReference>
<dbReference type="FunFam" id="3.30.160.60:FF:000737">
    <property type="entry name" value="Zinc finger protein 565"/>
    <property type="match status" value="1"/>
</dbReference>
<dbReference type="Gene3D" id="6.10.140.140">
    <property type="match status" value="1"/>
</dbReference>
<dbReference type="Gene3D" id="3.30.160.60">
    <property type="entry name" value="Classic Zinc Finger"/>
    <property type="match status" value="19"/>
</dbReference>
<dbReference type="InterPro" id="IPR001909">
    <property type="entry name" value="KRAB"/>
</dbReference>
<dbReference type="InterPro" id="IPR036051">
    <property type="entry name" value="KRAB_dom_sf"/>
</dbReference>
<dbReference type="InterPro" id="IPR050826">
    <property type="entry name" value="Krueppel_C2H2_ZnFinger"/>
</dbReference>
<dbReference type="InterPro" id="IPR036236">
    <property type="entry name" value="Znf_C2H2_sf"/>
</dbReference>
<dbReference type="InterPro" id="IPR013087">
    <property type="entry name" value="Znf_C2H2_type"/>
</dbReference>
<dbReference type="PANTHER" id="PTHR24377">
    <property type="entry name" value="IP01015P-RELATED"/>
    <property type="match status" value="1"/>
</dbReference>
<dbReference type="Pfam" id="PF01352">
    <property type="entry name" value="KRAB"/>
    <property type="match status" value="1"/>
</dbReference>
<dbReference type="Pfam" id="PF00096">
    <property type="entry name" value="zf-C2H2"/>
    <property type="match status" value="17"/>
</dbReference>
<dbReference type="Pfam" id="PF13465">
    <property type="entry name" value="zf-H2C2_2"/>
    <property type="match status" value="1"/>
</dbReference>
<dbReference type="SMART" id="SM00349">
    <property type="entry name" value="KRAB"/>
    <property type="match status" value="1"/>
</dbReference>
<dbReference type="SMART" id="SM00614">
    <property type="entry name" value="ZnF_BED"/>
    <property type="match status" value="3"/>
</dbReference>
<dbReference type="SMART" id="SM00355">
    <property type="entry name" value="ZnF_C2H2"/>
    <property type="match status" value="19"/>
</dbReference>
<dbReference type="SUPFAM" id="SSF57667">
    <property type="entry name" value="beta-beta-alpha zinc fingers"/>
    <property type="match status" value="10"/>
</dbReference>
<dbReference type="SUPFAM" id="SSF109640">
    <property type="entry name" value="KRAB domain (Kruppel-associated box)"/>
    <property type="match status" value="1"/>
</dbReference>
<dbReference type="PROSITE" id="PS50805">
    <property type="entry name" value="KRAB"/>
    <property type="match status" value="1"/>
</dbReference>
<dbReference type="PROSITE" id="PS00028">
    <property type="entry name" value="ZINC_FINGER_C2H2_1"/>
    <property type="match status" value="19"/>
</dbReference>
<dbReference type="PROSITE" id="PS50157">
    <property type="entry name" value="ZINC_FINGER_C2H2_2"/>
    <property type="match status" value="19"/>
</dbReference>
<sequence length="752" mass="86023">MEDLSAPESALFQGGHTLLPSASFQESVTFKDVIVDFTQEEWKQLDPVQRGLFRDVTLENYTHLVSIGLQVSKPDVISQLEQGTEPWIVEPSIPVGTPGDWVTRPENSITASELDISGEEPSPGAVAEKHKRDDPWSTNFLETCESKGSPERQQANKQTLPREIKITEKTIPTLEQAHVNNDFEKSISVSLDLLTHKQISPKQTSTKTNVKQNLNPVKKEKSCKCNECGKAFTYCSALIRHQRTHTGEKPYKCNECEKAFSRSENLINHQRIHTGDKPYKCDQCGKGFIEGPSLTQHQRIHTGEKPYKCDECGKAFSQRTHLVQHQRIHTGEKPYTCNECGKAFSQRGHFMEHQKIHTGEKPFKCDECDKTFTRSTHLTQHQKIHTGEKTYKCNECGKAFNGPSTFIRHHMIHTGEKPYECNECGKAFSQHSNLTQHQKTHTGEKPYDCAECGKSFSYWSSLAQHLKIHTGEKPYKCNECGKAFSYCSSLTQHRRIHTREKPFECSECGKAFSYLSNLNQHQKTHTQEKAYECKECGKAFIRSSSLAKHERIHTGEKPYQCHECGKTFSYGSSLIQHRKIHTGERPYKCNECGRAFNQNIHLTQHKRIHTGAKPYECAECGKAFRHCSSLAQHQKTHTEEKPYHCNKCEKAFSQSSHLAQHQRIHTGEKPYKCNECDKTFSRSTHLTEHQNTHTGEKPYNCNECRKTFSQSTYLIQHQRIHSAEKPFGCNDCGKAFRYRSALNKHQRLHPGI</sequence>
<accession>A6QLU5</accession>
<comment type="function">
    <text evidence="1">May be involved in transcriptional regulation.</text>
</comment>
<comment type="subcellular location">
    <subcellularLocation>
        <location evidence="1">Nucleus</location>
    </subcellularLocation>
</comment>
<comment type="similarity">
    <text evidence="5">Belongs to the krueppel C2H2-type zinc-finger protein family.</text>
</comment>
<proteinExistence type="evidence at transcript level"/>